<protein>
    <recommendedName>
        <fullName>Riboflavin biosynthesis protein RibD</fullName>
    </recommendedName>
    <domain>
        <recommendedName>
            <fullName>Diaminohydroxyphosphoribosylaminopyrimidine deaminase</fullName>
            <shortName>DRAP deaminase</shortName>
            <ecNumber>3.5.4.26</ecNumber>
        </recommendedName>
        <alternativeName>
            <fullName>Riboflavin-specific deaminase</fullName>
        </alternativeName>
    </domain>
    <domain>
        <recommendedName>
            <fullName>5-amino-6-(5-phosphoribosylamino)uracil reductase</fullName>
            <ecNumber>1.1.1.193</ecNumber>
        </recommendedName>
        <alternativeName>
            <fullName>HTP reductase</fullName>
        </alternativeName>
    </domain>
</protein>
<name>RIBD_SYNY3</name>
<comment type="function">
    <text>Converts 2,5-diamino-6-(ribosylamino)-4(3h)-pyrimidinone 5'-phosphate into 5-amino-6-(ribosylamino)-2,4(1h,3h)-pyrimidinedione 5'-phosphate.</text>
</comment>
<comment type="catalytic activity">
    <reaction>
        <text>2,5-diamino-6-hydroxy-4-(5-phosphoribosylamino)-pyrimidine + H2O + H(+) = 5-amino-6-(5-phospho-D-ribosylamino)uracil + NH4(+)</text>
        <dbReference type="Rhea" id="RHEA:21868"/>
        <dbReference type="ChEBI" id="CHEBI:15377"/>
        <dbReference type="ChEBI" id="CHEBI:15378"/>
        <dbReference type="ChEBI" id="CHEBI:28938"/>
        <dbReference type="ChEBI" id="CHEBI:58453"/>
        <dbReference type="ChEBI" id="CHEBI:58614"/>
        <dbReference type="EC" id="3.5.4.26"/>
    </reaction>
</comment>
<comment type="catalytic activity">
    <reaction>
        <text>5-amino-6-(5-phospho-D-ribitylamino)uracil + NADP(+) = 5-amino-6-(5-phospho-D-ribosylamino)uracil + NADPH + H(+)</text>
        <dbReference type="Rhea" id="RHEA:17845"/>
        <dbReference type="ChEBI" id="CHEBI:15378"/>
        <dbReference type="ChEBI" id="CHEBI:57783"/>
        <dbReference type="ChEBI" id="CHEBI:58349"/>
        <dbReference type="ChEBI" id="CHEBI:58421"/>
        <dbReference type="ChEBI" id="CHEBI:58453"/>
        <dbReference type="EC" id="1.1.1.193"/>
    </reaction>
</comment>
<comment type="cofactor">
    <cofactor evidence="1">
        <name>Zn(2+)</name>
        <dbReference type="ChEBI" id="CHEBI:29105"/>
    </cofactor>
    <text evidence="1">Binds 1 zinc ion.</text>
</comment>
<comment type="pathway">
    <text>Cofactor biosynthesis; riboflavin biosynthesis; 5-amino-6-(D-ribitylamino)uracil from GTP: step 2/4.</text>
</comment>
<comment type="pathway">
    <text>Cofactor biosynthesis; riboflavin biosynthesis; 5-amino-6-(D-ribitylamino)uracil from GTP: step 3/4.</text>
</comment>
<comment type="similarity">
    <text evidence="3">In the N-terminal section; belongs to the cytidine and deoxycytidylate deaminase family.</text>
</comment>
<comment type="similarity">
    <text evidence="3">In the C-terminal section; belongs to the HTP reductase family.</text>
</comment>
<organism>
    <name type="scientific">Synechocystis sp. (strain ATCC 27184 / PCC 6803 / Kazusa)</name>
    <dbReference type="NCBI Taxonomy" id="1111708"/>
    <lineage>
        <taxon>Bacteria</taxon>
        <taxon>Bacillati</taxon>
        <taxon>Cyanobacteriota</taxon>
        <taxon>Cyanophyceae</taxon>
        <taxon>Synechococcales</taxon>
        <taxon>Merismopediaceae</taxon>
        <taxon>Synechocystis</taxon>
    </lineage>
</organism>
<reference key="1">
    <citation type="journal article" date="1995" name="DNA Res.">
        <title>Sequence analysis of the genome of the unicellular cyanobacterium Synechocystis sp. strain PCC6803. I. Sequence features in the 1 Mb region from map positions 64% to 92% of the genome.</title>
        <authorList>
            <person name="Kaneko T."/>
            <person name="Tanaka A."/>
            <person name="Sato S."/>
            <person name="Kotani H."/>
            <person name="Sazuka T."/>
            <person name="Miyajima N."/>
            <person name="Sugiura M."/>
            <person name="Tabata S."/>
        </authorList>
    </citation>
    <scope>NUCLEOTIDE SEQUENCE [LARGE SCALE GENOMIC DNA]</scope>
    <source>
        <strain>ATCC 27184 / PCC 6803 / N-1</strain>
    </source>
</reference>
<reference key="2">
    <citation type="journal article" date="1996" name="DNA Res.">
        <title>Sequence analysis of the genome of the unicellular cyanobacterium Synechocystis sp. strain PCC6803. II. Sequence determination of the entire genome and assignment of potential protein-coding regions.</title>
        <authorList>
            <person name="Kaneko T."/>
            <person name="Sato S."/>
            <person name="Kotani H."/>
            <person name="Tanaka A."/>
            <person name="Asamizu E."/>
            <person name="Nakamura Y."/>
            <person name="Miyajima N."/>
            <person name="Hirosawa M."/>
            <person name="Sugiura M."/>
            <person name="Sasamoto S."/>
            <person name="Kimura T."/>
            <person name="Hosouchi T."/>
            <person name="Matsuno A."/>
            <person name="Muraki A."/>
            <person name="Nakazaki N."/>
            <person name="Naruo K."/>
            <person name="Okumura S."/>
            <person name="Shimpo S."/>
            <person name="Takeuchi C."/>
            <person name="Wada T."/>
            <person name="Watanabe A."/>
            <person name="Yamada M."/>
            <person name="Yasuda M."/>
            <person name="Tabata S."/>
        </authorList>
    </citation>
    <scope>NUCLEOTIDE SEQUENCE [LARGE SCALE GENOMIC DNA]</scope>
    <source>
        <strain>ATCC 27184 / PCC 6803 / Kazusa</strain>
    </source>
</reference>
<feature type="chain" id="PRO_0000171724" description="Riboflavin biosynthesis protein RibD">
    <location>
        <begin position="1"/>
        <end position="368"/>
    </location>
</feature>
<feature type="domain" description="CMP/dCMP-type deaminase" evidence="2">
    <location>
        <begin position="2"/>
        <end position="124"/>
    </location>
</feature>
<feature type="region of interest" description="Deaminase">
    <location>
        <begin position="1"/>
        <end position="146"/>
    </location>
</feature>
<feature type="region of interest" description="Reductase">
    <location>
        <begin position="147"/>
        <end position="368"/>
    </location>
</feature>
<feature type="active site" description="Proton donor" evidence="1">
    <location>
        <position position="53"/>
    </location>
</feature>
<feature type="binding site" evidence="1">
    <location>
        <position position="51"/>
    </location>
    <ligand>
        <name>Zn(2+)</name>
        <dbReference type="ChEBI" id="CHEBI:29105"/>
        <note>catalytic</note>
    </ligand>
</feature>
<feature type="binding site" evidence="1">
    <location>
        <position position="76"/>
    </location>
    <ligand>
        <name>Zn(2+)</name>
        <dbReference type="ChEBI" id="CHEBI:29105"/>
        <note>catalytic</note>
    </ligand>
</feature>
<feature type="binding site" evidence="1">
    <location>
        <position position="85"/>
    </location>
    <ligand>
        <name>Zn(2+)</name>
        <dbReference type="ChEBI" id="CHEBI:29105"/>
        <note>catalytic</note>
    </ligand>
</feature>
<feature type="binding site" evidence="1">
    <location>
        <position position="155"/>
    </location>
    <ligand>
        <name>NADP(+)</name>
        <dbReference type="ChEBI" id="CHEBI:58349"/>
    </ligand>
</feature>
<feature type="binding site" evidence="1">
    <location>
        <position position="169"/>
    </location>
    <ligand>
        <name>substrate</name>
    </ligand>
</feature>
<feature type="binding site" evidence="1">
    <location>
        <position position="171"/>
    </location>
    <ligand>
        <name>NADP(+)</name>
        <dbReference type="ChEBI" id="CHEBI:58349"/>
    </ligand>
</feature>
<feature type="binding site" evidence="1">
    <location>
        <position position="185"/>
    </location>
    <ligand>
        <name>substrate</name>
    </ligand>
</feature>
<feature type="binding site" evidence="1">
    <location>
        <position position="197"/>
    </location>
    <ligand>
        <name>NADP(+)</name>
        <dbReference type="ChEBI" id="CHEBI:58349"/>
    </ligand>
</feature>
<feature type="binding site" evidence="1">
    <location>
        <position position="201"/>
    </location>
    <ligand>
        <name>NADP(+)</name>
        <dbReference type="ChEBI" id="CHEBI:58349"/>
    </ligand>
</feature>
<feature type="binding site" evidence="1">
    <location>
        <position position="205"/>
    </location>
    <ligand>
        <name>substrate</name>
    </ligand>
</feature>
<feature type="binding site" evidence="1">
    <location>
        <position position="289"/>
    </location>
    <ligand>
        <name>substrate</name>
    </ligand>
</feature>
<feature type="binding site" evidence="1">
    <location>
        <begin position="291"/>
        <end position="297"/>
    </location>
    <ligand>
        <name>NADP(+)</name>
        <dbReference type="ChEBI" id="CHEBI:58349"/>
    </ligand>
</feature>
<keyword id="KW-0378">Hydrolase</keyword>
<keyword id="KW-0479">Metal-binding</keyword>
<keyword id="KW-0511">Multifunctional enzyme</keyword>
<keyword id="KW-0521">NADP</keyword>
<keyword id="KW-0560">Oxidoreductase</keyword>
<keyword id="KW-1185">Reference proteome</keyword>
<keyword id="KW-0686">Riboflavin biosynthesis</keyword>
<keyword id="KW-0862">Zinc</keyword>
<dbReference type="EC" id="3.5.4.26"/>
<dbReference type="EC" id="1.1.1.193"/>
<dbReference type="EMBL" id="BA000022">
    <property type="protein sequence ID" value="BAA10295.1"/>
    <property type="molecule type" value="Genomic_DNA"/>
</dbReference>
<dbReference type="PIR" id="S74377">
    <property type="entry name" value="S74377"/>
</dbReference>
<dbReference type="SMR" id="Q55158"/>
<dbReference type="FunCoup" id="Q55158">
    <property type="interactions" value="441"/>
</dbReference>
<dbReference type="IntAct" id="Q55158">
    <property type="interactions" value="7"/>
</dbReference>
<dbReference type="STRING" id="1148.gene:10499795"/>
<dbReference type="PaxDb" id="1148-1001153"/>
<dbReference type="EnsemblBacteria" id="BAA10295">
    <property type="protein sequence ID" value="BAA10295"/>
    <property type="gene ID" value="BAA10295"/>
</dbReference>
<dbReference type="KEGG" id="syn:slr0066"/>
<dbReference type="eggNOG" id="COG0117">
    <property type="taxonomic scope" value="Bacteria"/>
</dbReference>
<dbReference type="eggNOG" id="COG1985">
    <property type="taxonomic scope" value="Bacteria"/>
</dbReference>
<dbReference type="InParanoid" id="Q55158"/>
<dbReference type="PhylomeDB" id="Q55158"/>
<dbReference type="UniPathway" id="UPA00275">
    <property type="reaction ID" value="UER00401"/>
</dbReference>
<dbReference type="UniPathway" id="UPA00275">
    <property type="reaction ID" value="UER00402"/>
</dbReference>
<dbReference type="Proteomes" id="UP000001425">
    <property type="component" value="Chromosome"/>
</dbReference>
<dbReference type="GO" id="GO:0008703">
    <property type="term" value="F:5-amino-6-(5-phosphoribosylamino)uracil reductase activity"/>
    <property type="evidence" value="ECO:0007669"/>
    <property type="project" value="UniProtKB-EC"/>
</dbReference>
<dbReference type="GO" id="GO:0008835">
    <property type="term" value="F:diaminohydroxyphosphoribosylaminopyrimidine deaminase activity"/>
    <property type="evidence" value="ECO:0007669"/>
    <property type="project" value="UniProtKB-EC"/>
</dbReference>
<dbReference type="GO" id="GO:0050661">
    <property type="term" value="F:NADP binding"/>
    <property type="evidence" value="ECO:0007669"/>
    <property type="project" value="InterPro"/>
</dbReference>
<dbReference type="GO" id="GO:0008270">
    <property type="term" value="F:zinc ion binding"/>
    <property type="evidence" value="ECO:0007669"/>
    <property type="project" value="InterPro"/>
</dbReference>
<dbReference type="GO" id="GO:0009231">
    <property type="term" value="P:riboflavin biosynthetic process"/>
    <property type="evidence" value="ECO:0007669"/>
    <property type="project" value="UniProtKB-UniPathway"/>
</dbReference>
<dbReference type="CDD" id="cd01284">
    <property type="entry name" value="Riboflavin_deaminase-reductase"/>
    <property type="match status" value="1"/>
</dbReference>
<dbReference type="FunFam" id="3.40.140.10:FF:000025">
    <property type="entry name" value="Riboflavin biosynthesis protein RibD"/>
    <property type="match status" value="1"/>
</dbReference>
<dbReference type="Gene3D" id="3.40.140.10">
    <property type="entry name" value="Cytidine Deaminase, domain 2"/>
    <property type="match status" value="1"/>
</dbReference>
<dbReference type="Gene3D" id="3.40.430.10">
    <property type="entry name" value="Dihydrofolate Reductase, subunit A"/>
    <property type="match status" value="1"/>
</dbReference>
<dbReference type="InterPro" id="IPR016192">
    <property type="entry name" value="APOBEC/CMP_deaminase_Zn-bd"/>
</dbReference>
<dbReference type="InterPro" id="IPR002125">
    <property type="entry name" value="CMP_dCMP_dom"/>
</dbReference>
<dbReference type="InterPro" id="IPR016193">
    <property type="entry name" value="Cytidine_deaminase-like"/>
</dbReference>
<dbReference type="InterPro" id="IPR024072">
    <property type="entry name" value="DHFR-like_dom_sf"/>
</dbReference>
<dbReference type="InterPro" id="IPR004794">
    <property type="entry name" value="Eubact_RibD"/>
</dbReference>
<dbReference type="InterPro" id="IPR011549">
    <property type="entry name" value="RibD_C"/>
</dbReference>
<dbReference type="InterPro" id="IPR002734">
    <property type="entry name" value="RibDG_C"/>
</dbReference>
<dbReference type="InterPro" id="IPR050765">
    <property type="entry name" value="Riboflavin_Biosynth_HTPR"/>
</dbReference>
<dbReference type="NCBIfam" id="TIGR00326">
    <property type="entry name" value="eubact_ribD"/>
    <property type="match status" value="1"/>
</dbReference>
<dbReference type="NCBIfam" id="TIGR00227">
    <property type="entry name" value="ribD_Cterm"/>
    <property type="match status" value="1"/>
</dbReference>
<dbReference type="PANTHER" id="PTHR38011:SF7">
    <property type="entry name" value="2,5-DIAMINO-6-RIBOSYLAMINO-4(3H)-PYRIMIDINONE 5'-PHOSPHATE REDUCTASE"/>
    <property type="match status" value="1"/>
</dbReference>
<dbReference type="PANTHER" id="PTHR38011">
    <property type="entry name" value="DIHYDROFOLATE REDUCTASE FAMILY PROTEIN (AFU_ORTHOLOGUE AFUA_8G06820)"/>
    <property type="match status" value="1"/>
</dbReference>
<dbReference type="Pfam" id="PF00383">
    <property type="entry name" value="dCMP_cyt_deam_1"/>
    <property type="match status" value="1"/>
</dbReference>
<dbReference type="Pfam" id="PF01872">
    <property type="entry name" value="RibD_C"/>
    <property type="match status" value="1"/>
</dbReference>
<dbReference type="PIRSF" id="PIRSF006769">
    <property type="entry name" value="RibD"/>
    <property type="match status" value="1"/>
</dbReference>
<dbReference type="SUPFAM" id="SSF53927">
    <property type="entry name" value="Cytidine deaminase-like"/>
    <property type="match status" value="1"/>
</dbReference>
<dbReference type="SUPFAM" id="SSF53597">
    <property type="entry name" value="Dihydrofolate reductase-like"/>
    <property type="match status" value="1"/>
</dbReference>
<dbReference type="PROSITE" id="PS00903">
    <property type="entry name" value="CYT_DCMP_DEAMINASES_1"/>
    <property type="match status" value="1"/>
</dbReference>
<dbReference type="PROSITE" id="PS51747">
    <property type="entry name" value="CYT_DCMP_DEAMINASES_2"/>
    <property type="match status" value="1"/>
</dbReference>
<sequence length="368" mass="39995">MISDQTHMRRCLTLAKTAIGKTAPNPLVGSVIVQGDEIVGQGFHPQAGQPHGEIFALWEAGDRAKGATLYVNLEPCNHQGRTPPCTEAIIQAGIAKVVVGMVDPNPLVAGKGISRLRQAGIEVKVGVEEEACQRLNEAFCFRIKHQRPFGIFKYAMTLDGKIATAQAHSSWVTSSSARHWVHQLRSQCQAVIIGGNTVRRDNPLLTNHGVGEVNPLRVVLSRSLDLPIEAQLWDQDVAKTLVITEKTCDRNTLSHLEKLEVETLVLEQLTPLAVMEELYQRNCLQVLWECGGILAAEAIAMGTVQKVHAFLAPKIIGGVAAPTPVGELGFQQMTQALNLTDLHCQAIGPDWLFTGYLCGNDDNGQSNI</sequence>
<gene>
    <name type="primary">ribD</name>
    <name type="ordered locus">slr0066</name>
</gene>
<evidence type="ECO:0000250" key="1"/>
<evidence type="ECO:0000255" key="2">
    <source>
        <dbReference type="PROSITE-ProRule" id="PRU01083"/>
    </source>
</evidence>
<evidence type="ECO:0000305" key="3"/>
<accession>Q55158</accession>
<proteinExistence type="inferred from homology"/>